<accession>Q66EJ6</accession>
<reference key="1">
    <citation type="journal article" date="2004" name="Proc. Natl. Acad. Sci. U.S.A.">
        <title>Insights into the evolution of Yersinia pestis through whole-genome comparison with Yersinia pseudotuberculosis.</title>
        <authorList>
            <person name="Chain P.S.G."/>
            <person name="Carniel E."/>
            <person name="Larimer F.W."/>
            <person name="Lamerdin J."/>
            <person name="Stoutland P.O."/>
            <person name="Regala W.M."/>
            <person name="Georgescu A.M."/>
            <person name="Vergez L.M."/>
            <person name="Land M.L."/>
            <person name="Motin V.L."/>
            <person name="Brubaker R.R."/>
            <person name="Fowler J."/>
            <person name="Hinnebusch J."/>
            <person name="Marceau M."/>
            <person name="Medigue C."/>
            <person name="Simonet M."/>
            <person name="Chenal-Francisque V."/>
            <person name="Souza B."/>
            <person name="Dacheux D."/>
            <person name="Elliott J.M."/>
            <person name="Derbise A."/>
            <person name="Hauser L.J."/>
            <person name="Garcia E."/>
        </authorList>
    </citation>
    <scope>NUCLEOTIDE SEQUENCE [LARGE SCALE GENOMIC DNA]</scope>
    <source>
        <strain>IP32953</strain>
    </source>
</reference>
<sequence>MLIKLLTKVFGSRNDRTLRRMQKVVDVINRMEPDIEKLTDTELRAKTDEFRERLAKGEVLENLIPEAFAVVREASKRVFGMRHFDVQLLGGMVLNERCIAEMRTGEGKTLTATLPAYLNALSGRGVHVVTVNDYLAQRDAENNRPLFEFLGLSIGINLPNMTAPAKRAAYAADITYGTNNEFGFDYLRDNMAFSPEERVQRQLHYALVDEVDSILIDEARTPLIISGPAEDSSEMYIRVNKLIPKLIRQEKEDSDSFQGEGHFSVDEKSRQVHLTERGLILIEQMLVEAGIMDEGESLYSPANIMLMHHVTAALRAHVLFTRDVDYIVKDGEVIIVDEHTGRTMQGRRWSDGLHQAVEAKEGVEIQNENQTLASITFQNYFRLYEKLAGMTGTADTEAFEFSSIYKLDTIVVPTNRPMIRKDLADLVYMTEQEKIGAIIEDIRERTANGQPVLVGTISIEKSEVVSAELTKAGIEHKVLNAKFHAMEAEIVSQAGQPGAVTIATNMAGRGTDIVLGGSWQSEIAALEDPTEEQIAAIKAAWQIRHDAVLASGGLHIIGTERHESRRIDNQLRGRAGRQGDAGSSRFYLSMEDALMRIFASDRVSGMMRKLGMKPGEAIEHPWVTKAIANAQRKVESRNFDIRKQLLEYDDVANDQRRAIYSQRNELLDVSDVSETINSIREDVFKTTIDSYIPTQSLEEMWDIEGLEQRLKNDFDLDMPIAKWLEDEPQLHEETLRERILQQAIETYQRKEEVVGIEMMRNFEKGVMLQTLDSLWKEHLAAMDYLRQGIHLRGYAQKDPKQEYKRESFAMFAAMLESLKYEVISVLSKVQVRMPEEVEALEVQRREEAERLARQQQLSHQTDNSALMSEEEVKVANSLERKVGRNDPCPCGSGKKYKQCHGRLQ</sequence>
<gene>
    <name evidence="1" type="primary">secA</name>
    <name type="ordered locus">YPTB0697</name>
</gene>
<name>SECA_YERPS</name>
<dbReference type="EC" id="7.4.2.8" evidence="1"/>
<dbReference type="EMBL" id="BX936398">
    <property type="protein sequence ID" value="CAH19937.1"/>
    <property type="molecule type" value="Genomic_DNA"/>
</dbReference>
<dbReference type="RefSeq" id="WP_002210426.1">
    <property type="nucleotide sequence ID" value="NZ_CP009712.1"/>
</dbReference>
<dbReference type="SMR" id="Q66EJ6"/>
<dbReference type="GeneID" id="57974051"/>
<dbReference type="KEGG" id="ypo:BZ17_1858"/>
<dbReference type="KEGG" id="yps:YPTB0697"/>
<dbReference type="PATRIC" id="fig|273123.14.peg.1972"/>
<dbReference type="Proteomes" id="UP000001011">
    <property type="component" value="Chromosome"/>
</dbReference>
<dbReference type="GO" id="GO:0031522">
    <property type="term" value="C:cell envelope Sec protein transport complex"/>
    <property type="evidence" value="ECO:0007669"/>
    <property type="project" value="TreeGrafter"/>
</dbReference>
<dbReference type="GO" id="GO:0005829">
    <property type="term" value="C:cytosol"/>
    <property type="evidence" value="ECO:0007669"/>
    <property type="project" value="TreeGrafter"/>
</dbReference>
<dbReference type="GO" id="GO:0005886">
    <property type="term" value="C:plasma membrane"/>
    <property type="evidence" value="ECO:0007669"/>
    <property type="project" value="UniProtKB-SubCell"/>
</dbReference>
<dbReference type="GO" id="GO:0005524">
    <property type="term" value="F:ATP binding"/>
    <property type="evidence" value="ECO:0007669"/>
    <property type="project" value="UniProtKB-UniRule"/>
</dbReference>
<dbReference type="GO" id="GO:0046872">
    <property type="term" value="F:metal ion binding"/>
    <property type="evidence" value="ECO:0007669"/>
    <property type="project" value="UniProtKB-KW"/>
</dbReference>
<dbReference type="GO" id="GO:0008564">
    <property type="term" value="F:protein-exporting ATPase activity"/>
    <property type="evidence" value="ECO:0007669"/>
    <property type="project" value="UniProtKB-EC"/>
</dbReference>
<dbReference type="GO" id="GO:0065002">
    <property type="term" value="P:intracellular protein transmembrane transport"/>
    <property type="evidence" value="ECO:0007669"/>
    <property type="project" value="UniProtKB-UniRule"/>
</dbReference>
<dbReference type="GO" id="GO:0017038">
    <property type="term" value="P:protein import"/>
    <property type="evidence" value="ECO:0007669"/>
    <property type="project" value="InterPro"/>
</dbReference>
<dbReference type="GO" id="GO:0006605">
    <property type="term" value="P:protein targeting"/>
    <property type="evidence" value="ECO:0007669"/>
    <property type="project" value="UniProtKB-UniRule"/>
</dbReference>
<dbReference type="GO" id="GO:0043952">
    <property type="term" value="P:protein transport by the Sec complex"/>
    <property type="evidence" value="ECO:0007669"/>
    <property type="project" value="TreeGrafter"/>
</dbReference>
<dbReference type="CDD" id="cd17928">
    <property type="entry name" value="DEXDc_SecA"/>
    <property type="match status" value="1"/>
</dbReference>
<dbReference type="CDD" id="cd18803">
    <property type="entry name" value="SF2_C_secA"/>
    <property type="match status" value="1"/>
</dbReference>
<dbReference type="FunFam" id="1.10.3060.10:FF:000001">
    <property type="entry name" value="Preprotein translocase subunit SecA"/>
    <property type="match status" value="1"/>
</dbReference>
<dbReference type="FunFam" id="3.40.50.300:FF:000081">
    <property type="entry name" value="Preprotein translocase subunit SecA"/>
    <property type="match status" value="1"/>
</dbReference>
<dbReference type="FunFam" id="3.40.50.300:FF:000113">
    <property type="entry name" value="Preprotein translocase subunit SecA"/>
    <property type="match status" value="1"/>
</dbReference>
<dbReference type="FunFam" id="3.90.1440.10:FF:000001">
    <property type="entry name" value="Preprotein translocase subunit SecA"/>
    <property type="match status" value="1"/>
</dbReference>
<dbReference type="Gene3D" id="1.10.3060.10">
    <property type="entry name" value="Helical scaffold and wing domains of SecA"/>
    <property type="match status" value="1"/>
</dbReference>
<dbReference type="Gene3D" id="3.40.50.300">
    <property type="entry name" value="P-loop containing nucleotide triphosphate hydrolases"/>
    <property type="match status" value="2"/>
</dbReference>
<dbReference type="Gene3D" id="3.90.1440.10">
    <property type="entry name" value="SecA, preprotein cross-linking domain"/>
    <property type="match status" value="1"/>
</dbReference>
<dbReference type="HAMAP" id="MF_01382">
    <property type="entry name" value="SecA"/>
    <property type="match status" value="1"/>
</dbReference>
<dbReference type="InterPro" id="IPR014001">
    <property type="entry name" value="Helicase_ATP-bd"/>
</dbReference>
<dbReference type="InterPro" id="IPR027417">
    <property type="entry name" value="P-loop_NTPase"/>
</dbReference>
<dbReference type="InterPro" id="IPR004027">
    <property type="entry name" value="SEC_C_motif"/>
</dbReference>
<dbReference type="InterPro" id="IPR000185">
    <property type="entry name" value="SecA"/>
</dbReference>
<dbReference type="InterPro" id="IPR020937">
    <property type="entry name" value="SecA_CS"/>
</dbReference>
<dbReference type="InterPro" id="IPR011115">
    <property type="entry name" value="SecA_DEAD"/>
</dbReference>
<dbReference type="InterPro" id="IPR014018">
    <property type="entry name" value="SecA_motor_DEAD"/>
</dbReference>
<dbReference type="InterPro" id="IPR011130">
    <property type="entry name" value="SecA_preprotein_X-link_dom"/>
</dbReference>
<dbReference type="InterPro" id="IPR044722">
    <property type="entry name" value="SecA_SF2_C"/>
</dbReference>
<dbReference type="InterPro" id="IPR011116">
    <property type="entry name" value="SecA_Wing/Scaffold"/>
</dbReference>
<dbReference type="InterPro" id="IPR036266">
    <property type="entry name" value="SecA_Wing/Scaffold_sf"/>
</dbReference>
<dbReference type="InterPro" id="IPR036670">
    <property type="entry name" value="SecA_X-link_sf"/>
</dbReference>
<dbReference type="NCBIfam" id="NF009538">
    <property type="entry name" value="PRK12904.1"/>
    <property type="match status" value="1"/>
</dbReference>
<dbReference type="NCBIfam" id="TIGR00963">
    <property type="entry name" value="secA"/>
    <property type="match status" value="1"/>
</dbReference>
<dbReference type="PANTHER" id="PTHR30612:SF0">
    <property type="entry name" value="CHLOROPLAST PROTEIN-TRANSPORTING ATPASE"/>
    <property type="match status" value="1"/>
</dbReference>
<dbReference type="PANTHER" id="PTHR30612">
    <property type="entry name" value="SECA INNER MEMBRANE COMPONENT OF SEC PROTEIN SECRETION SYSTEM"/>
    <property type="match status" value="1"/>
</dbReference>
<dbReference type="Pfam" id="PF21090">
    <property type="entry name" value="P-loop_SecA"/>
    <property type="match status" value="1"/>
</dbReference>
<dbReference type="Pfam" id="PF02810">
    <property type="entry name" value="SEC-C"/>
    <property type="match status" value="1"/>
</dbReference>
<dbReference type="Pfam" id="PF07517">
    <property type="entry name" value="SecA_DEAD"/>
    <property type="match status" value="1"/>
</dbReference>
<dbReference type="Pfam" id="PF01043">
    <property type="entry name" value="SecA_PP_bind"/>
    <property type="match status" value="1"/>
</dbReference>
<dbReference type="Pfam" id="PF07516">
    <property type="entry name" value="SecA_SW"/>
    <property type="match status" value="1"/>
</dbReference>
<dbReference type="PRINTS" id="PR00906">
    <property type="entry name" value="SECA"/>
</dbReference>
<dbReference type="SMART" id="SM00957">
    <property type="entry name" value="SecA_DEAD"/>
    <property type="match status" value="1"/>
</dbReference>
<dbReference type="SMART" id="SM00958">
    <property type="entry name" value="SecA_PP_bind"/>
    <property type="match status" value="1"/>
</dbReference>
<dbReference type="SUPFAM" id="SSF81886">
    <property type="entry name" value="Helical scaffold and wing domains of SecA"/>
    <property type="match status" value="1"/>
</dbReference>
<dbReference type="SUPFAM" id="SSF52540">
    <property type="entry name" value="P-loop containing nucleoside triphosphate hydrolases"/>
    <property type="match status" value="2"/>
</dbReference>
<dbReference type="SUPFAM" id="SSF81767">
    <property type="entry name" value="Pre-protein crosslinking domain of SecA"/>
    <property type="match status" value="1"/>
</dbReference>
<dbReference type="PROSITE" id="PS01312">
    <property type="entry name" value="SECA"/>
    <property type="match status" value="1"/>
</dbReference>
<dbReference type="PROSITE" id="PS51196">
    <property type="entry name" value="SECA_MOTOR_DEAD"/>
    <property type="match status" value="1"/>
</dbReference>
<keyword id="KW-0067">ATP-binding</keyword>
<keyword id="KW-0997">Cell inner membrane</keyword>
<keyword id="KW-1003">Cell membrane</keyword>
<keyword id="KW-0963">Cytoplasm</keyword>
<keyword id="KW-0472">Membrane</keyword>
<keyword id="KW-0479">Metal-binding</keyword>
<keyword id="KW-0547">Nucleotide-binding</keyword>
<keyword id="KW-0653">Protein transport</keyword>
<keyword id="KW-1278">Translocase</keyword>
<keyword id="KW-0811">Translocation</keyword>
<keyword id="KW-0813">Transport</keyword>
<keyword id="KW-0862">Zinc</keyword>
<organism>
    <name type="scientific">Yersinia pseudotuberculosis serotype I (strain IP32953)</name>
    <dbReference type="NCBI Taxonomy" id="273123"/>
    <lineage>
        <taxon>Bacteria</taxon>
        <taxon>Pseudomonadati</taxon>
        <taxon>Pseudomonadota</taxon>
        <taxon>Gammaproteobacteria</taxon>
        <taxon>Enterobacterales</taxon>
        <taxon>Yersiniaceae</taxon>
        <taxon>Yersinia</taxon>
    </lineage>
</organism>
<comment type="function">
    <text evidence="1">Part of the Sec protein translocase complex. Interacts with the SecYEG preprotein conducting channel. Has a central role in coupling the hydrolysis of ATP to the transfer of proteins into and across the cell membrane, serving both as a receptor for the preprotein-SecB complex and as an ATP-driven molecular motor driving the stepwise translocation of polypeptide chains across the membrane.</text>
</comment>
<comment type="catalytic activity">
    <reaction evidence="1">
        <text>ATP + H2O + cellular proteinSide 1 = ADP + phosphate + cellular proteinSide 2.</text>
        <dbReference type="EC" id="7.4.2.8"/>
    </reaction>
</comment>
<comment type="cofactor">
    <cofactor evidence="1">
        <name>Zn(2+)</name>
        <dbReference type="ChEBI" id="CHEBI:29105"/>
    </cofactor>
    <text evidence="1">May bind 1 zinc ion per subunit.</text>
</comment>
<comment type="subunit">
    <text evidence="1">Monomer and homodimer. Part of the essential Sec protein translocation apparatus which comprises SecA, SecYEG and auxiliary proteins SecDF-YajC and YidC.</text>
</comment>
<comment type="subcellular location">
    <subcellularLocation>
        <location evidence="1">Cell inner membrane</location>
        <topology evidence="1">Peripheral membrane protein</topology>
        <orientation evidence="1">Cytoplasmic side</orientation>
    </subcellularLocation>
    <subcellularLocation>
        <location evidence="1">Cytoplasm</location>
    </subcellularLocation>
    <text evidence="1">Distribution is 50-50.</text>
</comment>
<comment type="induction">
    <text evidence="1">Repressed under conditions of excess protein secretion capacity and derepressed when protein secretion becomes limiting. This is regulated by SecM.</text>
</comment>
<comment type="similarity">
    <text evidence="1">Belongs to the SecA family.</text>
</comment>
<evidence type="ECO:0000255" key="1">
    <source>
        <dbReference type="HAMAP-Rule" id="MF_01382"/>
    </source>
</evidence>
<evidence type="ECO:0000256" key="2">
    <source>
        <dbReference type="SAM" id="MobiDB-lite"/>
    </source>
</evidence>
<protein>
    <recommendedName>
        <fullName evidence="1">Protein translocase subunit SecA</fullName>
        <ecNumber evidence="1">7.4.2.8</ecNumber>
    </recommendedName>
</protein>
<proteinExistence type="inferred from homology"/>
<feature type="chain" id="PRO_0000321055" description="Protein translocase subunit SecA">
    <location>
        <begin position="1"/>
        <end position="904"/>
    </location>
</feature>
<feature type="region of interest" description="Disordered" evidence="2">
    <location>
        <begin position="851"/>
        <end position="870"/>
    </location>
</feature>
<feature type="binding site" evidence="1">
    <location>
        <position position="87"/>
    </location>
    <ligand>
        <name>ATP</name>
        <dbReference type="ChEBI" id="CHEBI:30616"/>
    </ligand>
</feature>
<feature type="binding site" evidence="1">
    <location>
        <begin position="105"/>
        <end position="109"/>
    </location>
    <ligand>
        <name>ATP</name>
        <dbReference type="ChEBI" id="CHEBI:30616"/>
    </ligand>
</feature>
<feature type="binding site" evidence="1">
    <location>
        <position position="512"/>
    </location>
    <ligand>
        <name>ATP</name>
        <dbReference type="ChEBI" id="CHEBI:30616"/>
    </ligand>
</feature>
<feature type="binding site" evidence="1">
    <location>
        <position position="888"/>
    </location>
    <ligand>
        <name>Zn(2+)</name>
        <dbReference type="ChEBI" id="CHEBI:29105"/>
    </ligand>
</feature>
<feature type="binding site" evidence="1">
    <location>
        <position position="890"/>
    </location>
    <ligand>
        <name>Zn(2+)</name>
        <dbReference type="ChEBI" id="CHEBI:29105"/>
    </ligand>
</feature>
<feature type="binding site" evidence="1">
    <location>
        <position position="899"/>
    </location>
    <ligand>
        <name>Zn(2+)</name>
        <dbReference type="ChEBI" id="CHEBI:29105"/>
    </ligand>
</feature>
<feature type="binding site" evidence="1">
    <location>
        <position position="900"/>
    </location>
    <ligand>
        <name>Zn(2+)</name>
        <dbReference type="ChEBI" id="CHEBI:29105"/>
    </ligand>
</feature>